<dbReference type="EC" id="2.1.2.11" evidence="1"/>
<dbReference type="EMBL" id="CP000930">
    <property type="protein sequence ID" value="ABZ85283.1"/>
    <property type="molecule type" value="Genomic_DNA"/>
</dbReference>
<dbReference type="RefSeq" id="WP_012283766.1">
    <property type="nucleotide sequence ID" value="NC_010337.2"/>
</dbReference>
<dbReference type="SMR" id="B0TC10"/>
<dbReference type="STRING" id="498761.HM1_2754"/>
<dbReference type="KEGG" id="hmo:HM1_2754"/>
<dbReference type="eggNOG" id="COG0413">
    <property type="taxonomic scope" value="Bacteria"/>
</dbReference>
<dbReference type="HOGENOM" id="CLU_036645_1_0_9"/>
<dbReference type="OrthoDB" id="9781789at2"/>
<dbReference type="UniPathway" id="UPA00028">
    <property type="reaction ID" value="UER00003"/>
</dbReference>
<dbReference type="Proteomes" id="UP000008550">
    <property type="component" value="Chromosome"/>
</dbReference>
<dbReference type="GO" id="GO:0005737">
    <property type="term" value="C:cytoplasm"/>
    <property type="evidence" value="ECO:0007669"/>
    <property type="project" value="UniProtKB-SubCell"/>
</dbReference>
<dbReference type="GO" id="GO:0003864">
    <property type="term" value="F:3-methyl-2-oxobutanoate hydroxymethyltransferase activity"/>
    <property type="evidence" value="ECO:0007669"/>
    <property type="project" value="UniProtKB-UniRule"/>
</dbReference>
<dbReference type="GO" id="GO:0000287">
    <property type="term" value="F:magnesium ion binding"/>
    <property type="evidence" value="ECO:0007669"/>
    <property type="project" value="TreeGrafter"/>
</dbReference>
<dbReference type="GO" id="GO:0015940">
    <property type="term" value="P:pantothenate biosynthetic process"/>
    <property type="evidence" value="ECO:0007669"/>
    <property type="project" value="UniProtKB-UniRule"/>
</dbReference>
<dbReference type="CDD" id="cd06557">
    <property type="entry name" value="KPHMT-like"/>
    <property type="match status" value="1"/>
</dbReference>
<dbReference type="FunFam" id="3.20.20.60:FF:000003">
    <property type="entry name" value="3-methyl-2-oxobutanoate hydroxymethyltransferase"/>
    <property type="match status" value="1"/>
</dbReference>
<dbReference type="Gene3D" id="3.20.20.60">
    <property type="entry name" value="Phosphoenolpyruvate-binding domains"/>
    <property type="match status" value="1"/>
</dbReference>
<dbReference type="HAMAP" id="MF_00156">
    <property type="entry name" value="PanB"/>
    <property type="match status" value="1"/>
</dbReference>
<dbReference type="InterPro" id="IPR003700">
    <property type="entry name" value="Pantoate_hydroxy_MeTrfase"/>
</dbReference>
<dbReference type="InterPro" id="IPR015813">
    <property type="entry name" value="Pyrv/PenolPyrv_kinase-like_dom"/>
</dbReference>
<dbReference type="InterPro" id="IPR040442">
    <property type="entry name" value="Pyrv_kinase-like_dom_sf"/>
</dbReference>
<dbReference type="NCBIfam" id="TIGR00222">
    <property type="entry name" value="panB"/>
    <property type="match status" value="1"/>
</dbReference>
<dbReference type="NCBIfam" id="NF001452">
    <property type="entry name" value="PRK00311.1"/>
    <property type="match status" value="1"/>
</dbReference>
<dbReference type="PANTHER" id="PTHR20881">
    <property type="entry name" value="3-METHYL-2-OXOBUTANOATE HYDROXYMETHYLTRANSFERASE"/>
    <property type="match status" value="1"/>
</dbReference>
<dbReference type="PANTHER" id="PTHR20881:SF0">
    <property type="entry name" value="3-METHYL-2-OXOBUTANOATE HYDROXYMETHYLTRANSFERASE"/>
    <property type="match status" value="1"/>
</dbReference>
<dbReference type="Pfam" id="PF02548">
    <property type="entry name" value="Pantoate_transf"/>
    <property type="match status" value="1"/>
</dbReference>
<dbReference type="PIRSF" id="PIRSF000388">
    <property type="entry name" value="Pantoate_hydroxy_MeTrfase"/>
    <property type="match status" value="1"/>
</dbReference>
<dbReference type="SUPFAM" id="SSF51621">
    <property type="entry name" value="Phosphoenolpyruvate/pyruvate domain"/>
    <property type="match status" value="1"/>
</dbReference>
<sequence>MAKKITLPQCKEMKKQGKRLRMITAYDYPFARLVDESEIEIILVGDSLGMVVLGYDSTVPVTLDEMIHHCKPVVRGAPNTLVVADMPFGSYNVSKEDAIRNANRMLKESGIEAVKVEGGTRMAPTVRALVDAGIPVMGHIGLTPQTAAQLGGFKVQGKTEDAAQQLLEDALALESAGAFSIVIECVPAGLARTITASLSIPTIGIGAGPYCNGQVLVIQDLLGIYDRFVPKFVKQYAQTGPAIRAALNDYAREVADGVFPGPEHSFGMDDEMKGLY</sequence>
<keyword id="KW-0963">Cytoplasm</keyword>
<keyword id="KW-0460">Magnesium</keyword>
<keyword id="KW-0479">Metal-binding</keyword>
<keyword id="KW-0566">Pantothenate biosynthesis</keyword>
<keyword id="KW-1185">Reference proteome</keyword>
<keyword id="KW-0808">Transferase</keyword>
<reference key="1">
    <citation type="journal article" date="2008" name="J. Bacteriol.">
        <title>The genome of Heliobacterium modesticaldum, a phototrophic representative of the Firmicutes containing the simplest photosynthetic apparatus.</title>
        <authorList>
            <person name="Sattley W.M."/>
            <person name="Madigan M.T."/>
            <person name="Swingley W.D."/>
            <person name="Cheung P.C."/>
            <person name="Clocksin K.M."/>
            <person name="Conrad A.L."/>
            <person name="Dejesa L.C."/>
            <person name="Honchak B.M."/>
            <person name="Jung D.O."/>
            <person name="Karbach L.E."/>
            <person name="Kurdoglu A."/>
            <person name="Lahiri S."/>
            <person name="Mastrian S.D."/>
            <person name="Page L.E."/>
            <person name="Taylor H.L."/>
            <person name="Wang Z.T."/>
            <person name="Raymond J."/>
            <person name="Chen M."/>
            <person name="Blankenship R.E."/>
            <person name="Touchman J.W."/>
        </authorList>
    </citation>
    <scope>NUCLEOTIDE SEQUENCE [LARGE SCALE GENOMIC DNA]</scope>
    <source>
        <strain>ATCC 51547 / Ice1</strain>
    </source>
</reference>
<protein>
    <recommendedName>
        <fullName evidence="1">3-methyl-2-oxobutanoate hydroxymethyltransferase</fullName>
        <ecNumber evidence="1">2.1.2.11</ecNumber>
    </recommendedName>
    <alternativeName>
        <fullName evidence="1">Ketopantoate hydroxymethyltransferase</fullName>
        <shortName evidence="1">KPHMT</shortName>
    </alternativeName>
</protein>
<feature type="chain" id="PRO_1000096971" description="3-methyl-2-oxobutanoate hydroxymethyltransferase">
    <location>
        <begin position="1"/>
        <end position="276"/>
    </location>
</feature>
<feature type="active site" description="Proton acceptor" evidence="1">
    <location>
        <position position="184"/>
    </location>
</feature>
<feature type="binding site" evidence="1">
    <location>
        <begin position="46"/>
        <end position="47"/>
    </location>
    <ligand>
        <name>3-methyl-2-oxobutanoate</name>
        <dbReference type="ChEBI" id="CHEBI:11851"/>
    </ligand>
</feature>
<feature type="binding site" evidence="1">
    <location>
        <position position="46"/>
    </location>
    <ligand>
        <name>Mg(2+)</name>
        <dbReference type="ChEBI" id="CHEBI:18420"/>
    </ligand>
</feature>
<feature type="binding site" evidence="1">
    <location>
        <position position="85"/>
    </location>
    <ligand>
        <name>3-methyl-2-oxobutanoate</name>
        <dbReference type="ChEBI" id="CHEBI:11851"/>
    </ligand>
</feature>
<feature type="binding site" evidence="1">
    <location>
        <position position="85"/>
    </location>
    <ligand>
        <name>Mg(2+)</name>
        <dbReference type="ChEBI" id="CHEBI:18420"/>
    </ligand>
</feature>
<feature type="binding site" evidence="1">
    <location>
        <position position="115"/>
    </location>
    <ligand>
        <name>3-methyl-2-oxobutanoate</name>
        <dbReference type="ChEBI" id="CHEBI:11851"/>
    </ligand>
</feature>
<feature type="binding site" evidence="1">
    <location>
        <position position="117"/>
    </location>
    <ligand>
        <name>Mg(2+)</name>
        <dbReference type="ChEBI" id="CHEBI:18420"/>
    </ligand>
</feature>
<gene>
    <name evidence="1" type="primary">panB</name>
    <name type="ordered locus">Helmi_26580</name>
    <name type="ORF">HM1_2754</name>
</gene>
<proteinExistence type="inferred from homology"/>
<organism>
    <name type="scientific">Heliobacterium modesticaldum (strain ATCC 51547 / Ice1)</name>
    <dbReference type="NCBI Taxonomy" id="498761"/>
    <lineage>
        <taxon>Bacteria</taxon>
        <taxon>Bacillati</taxon>
        <taxon>Bacillota</taxon>
        <taxon>Clostridia</taxon>
        <taxon>Eubacteriales</taxon>
        <taxon>Heliobacteriaceae</taxon>
        <taxon>Heliomicrobium</taxon>
    </lineage>
</organism>
<accession>B0TC10</accession>
<evidence type="ECO:0000255" key="1">
    <source>
        <dbReference type="HAMAP-Rule" id="MF_00156"/>
    </source>
</evidence>
<comment type="function">
    <text evidence="1">Catalyzes the reversible reaction in which hydroxymethyl group from 5,10-methylenetetrahydrofolate is transferred onto alpha-ketoisovalerate to form ketopantoate.</text>
</comment>
<comment type="catalytic activity">
    <reaction evidence="1">
        <text>3-methyl-2-oxobutanoate + (6R)-5,10-methylene-5,6,7,8-tetrahydrofolate + H2O = 2-dehydropantoate + (6S)-5,6,7,8-tetrahydrofolate</text>
        <dbReference type="Rhea" id="RHEA:11824"/>
        <dbReference type="ChEBI" id="CHEBI:11561"/>
        <dbReference type="ChEBI" id="CHEBI:11851"/>
        <dbReference type="ChEBI" id="CHEBI:15377"/>
        <dbReference type="ChEBI" id="CHEBI:15636"/>
        <dbReference type="ChEBI" id="CHEBI:57453"/>
        <dbReference type="EC" id="2.1.2.11"/>
    </reaction>
</comment>
<comment type="cofactor">
    <cofactor evidence="1">
        <name>Mg(2+)</name>
        <dbReference type="ChEBI" id="CHEBI:18420"/>
    </cofactor>
    <text evidence="1">Binds 1 Mg(2+) ion per subunit.</text>
</comment>
<comment type="pathway">
    <text evidence="1">Cofactor biosynthesis; (R)-pantothenate biosynthesis; (R)-pantoate from 3-methyl-2-oxobutanoate: step 1/2.</text>
</comment>
<comment type="subunit">
    <text evidence="1">Homodecamer; pentamer of dimers.</text>
</comment>
<comment type="subcellular location">
    <subcellularLocation>
        <location evidence="1">Cytoplasm</location>
    </subcellularLocation>
</comment>
<comment type="similarity">
    <text evidence="1">Belongs to the PanB family.</text>
</comment>
<name>PANB_HELMI</name>